<feature type="signal peptide" evidence="2">
    <location>
        <begin position="1"/>
        <end position="21"/>
    </location>
</feature>
<feature type="propeptide" id="PRO_0000398431" evidence="1">
    <location>
        <begin position="22"/>
        <end position="29"/>
    </location>
</feature>
<feature type="peptide" id="PRO_0000398432" description="U11-theraphotoxin-Cg1a">
    <location>
        <begin position="30"/>
        <end position="65"/>
    </location>
</feature>
<feature type="disulfide bond" evidence="1">
    <location>
        <begin position="31"/>
        <end position="45"/>
    </location>
</feature>
<feature type="disulfide bond" evidence="1">
    <location>
        <begin position="38"/>
        <end position="50"/>
    </location>
</feature>
<feature type="disulfide bond" evidence="1">
    <location>
        <begin position="44"/>
        <end position="57"/>
    </location>
</feature>
<organism>
    <name type="scientific">Chilobrachys guangxiensis</name>
    <name type="common">Chinese earth tiger tarantula</name>
    <name type="synonym">Chilobrachys jingzhao</name>
    <dbReference type="NCBI Taxonomy" id="278060"/>
    <lineage>
        <taxon>Eukaryota</taxon>
        <taxon>Metazoa</taxon>
        <taxon>Ecdysozoa</taxon>
        <taxon>Arthropoda</taxon>
        <taxon>Chelicerata</taxon>
        <taxon>Arachnida</taxon>
        <taxon>Araneae</taxon>
        <taxon>Mygalomorphae</taxon>
        <taxon>Theraphosidae</taxon>
        <taxon>Chilobrachys</taxon>
    </lineage>
</organism>
<keyword id="KW-1015">Disulfide bond</keyword>
<keyword id="KW-0872">Ion channel impairing toxin</keyword>
<keyword id="KW-0960">Knottin</keyword>
<keyword id="KW-0964">Secreted</keyword>
<keyword id="KW-0732">Signal</keyword>
<keyword id="KW-0800">Toxin</keyword>
<sequence length="65" mass="7327">MKTTILLVILGLTLLFALSAATELKDEERDCKGFQVKCKKDSECCSSYVCGSQWKWCVYPSPFGR</sequence>
<accession>B1P1D2</accession>
<proteinExistence type="evidence at transcript level"/>
<name>JZ16B_CHIGU</name>
<evidence type="ECO:0000250" key="1"/>
<evidence type="ECO:0000255" key="2"/>
<evidence type="ECO:0000305" key="3"/>
<evidence type="ECO:0000312" key="4">
    <source>
        <dbReference type="EMBL" id="ABY71682.1"/>
    </source>
</evidence>
<reference key="1">
    <citation type="journal article" date="2008" name="Cell. Mol. Life Sci.">
        <title>Molecular diversity and evolution of cystine knot toxins of the tarantula Chilobrachys jingzhao.</title>
        <authorList>
            <person name="Chen J."/>
            <person name="Deng M."/>
            <person name="He Q."/>
            <person name="Meng E."/>
            <person name="Jiang L."/>
            <person name="Liao Z."/>
            <person name="Rong M."/>
            <person name="Liang S."/>
        </authorList>
    </citation>
    <scope>NUCLEOTIDE SEQUENCE [LARGE SCALE MRNA]</scope>
    <source>
        <tissue>Venom gland</tissue>
    </source>
</reference>
<dbReference type="EMBL" id="EU233863">
    <property type="protein sequence ID" value="ABY71682.1"/>
    <property type="molecule type" value="mRNA"/>
</dbReference>
<dbReference type="SMR" id="B1P1D2"/>
<dbReference type="ArachnoServer" id="AS000810">
    <property type="toxin name" value="U11-theraphotoxin-Cg1a"/>
</dbReference>
<dbReference type="GO" id="GO:0005576">
    <property type="term" value="C:extracellular region"/>
    <property type="evidence" value="ECO:0007669"/>
    <property type="project" value="UniProtKB-SubCell"/>
</dbReference>
<dbReference type="GO" id="GO:0008200">
    <property type="term" value="F:ion channel inhibitor activity"/>
    <property type="evidence" value="ECO:0007669"/>
    <property type="project" value="InterPro"/>
</dbReference>
<dbReference type="GO" id="GO:0090729">
    <property type="term" value="F:toxin activity"/>
    <property type="evidence" value="ECO:0007669"/>
    <property type="project" value="UniProtKB-KW"/>
</dbReference>
<dbReference type="InterPro" id="IPR011696">
    <property type="entry name" value="Huwentoxin-1"/>
</dbReference>
<dbReference type="InterPro" id="IPR013140">
    <property type="entry name" value="Huwentoxin_CS1"/>
</dbReference>
<dbReference type="Pfam" id="PF07740">
    <property type="entry name" value="Toxin_12"/>
    <property type="match status" value="1"/>
</dbReference>
<dbReference type="SUPFAM" id="SSF57059">
    <property type="entry name" value="omega toxin-like"/>
    <property type="match status" value="1"/>
</dbReference>
<dbReference type="PROSITE" id="PS60021">
    <property type="entry name" value="HWTX_1"/>
    <property type="match status" value="1"/>
</dbReference>
<comment type="function">
    <text>Probable ion channel inhibitor.</text>
</comment>
<comment type="subcellular location">
    <subcellularLocation>
        <location evidence="1">Secreted</location>
    </subcellularLocation>
</comment>
<comment type="tissue specificity">
    <text>Expressed by the venom gland.</text>
</comment>
<comment type="domain">
    <text evidence="1">The presence of a 'disulfide through disulfide knot' structurally defines this protein as a knottin.</text>
</comment>
<comment type="similarity">
    <text evidence="3">Belongs to the neurotoxin 10 (Hwtx-1) family. 32 (Jztx-16) subfamily.</text>
</comment>
<protein>
    <recommendedName>
        <fullName>U11-theraphotoxin-Cg1a</fullName>
        <shortName>U11-TRTX-Cg1a</shortName>
    </recommendedName>
    <alternativeName>
        <fullName evidence="4">Jingzhaotoxin-16.2</fullName>
        <shortName evidence="4">JZTX-16.2</shortName>
    </alternativeName>
</protein>